<keyword id="KW-0007">Acetylation</keyword>
<keyword id="KW-0963">Cytoplasm</keyword>
<keyword id="KW-0240">DNA-directed RNA polymerase</keyword>
<keyword id="KW-0539">Nucleus</keyword>
<keyword id="KW-1185">Reference proteome</keyword>
<keyword id="KW-0804">Transcription</keyword>
<accession>P52432</accession>
<accession>Q3UJZ9</accession>
<sequence>MAAAQAVEEMRTRVVLGEFGVRNVHTTDFPGNYAGYDDAWDQNRFEKNFRVDVVQMDEDTLEFDMVGIDAAIANAFRRILLAEVPTMAVEKVLVYNNTSIVQDEILAHRLGLIPILADPRLFEYRNQGEEEGTEIDTLQFRLQVRCTRNPNAAKDSSDPNELYVNHKVYTRHMTWVPLGNQADVFPEGTIRPVHDDILIAQLRPGQEIDLMMHCVKGIGKDHAKFSPVATASYRLLPAITLLEPVEGEAAEELSQCFSPGVIEVEEVQGKKVARVANARLDTFSREIFRHEKLKKAVRLARVRDHYIFSVESTGVLPPDVLVSEAIKILMGKCRRFLDELDAVEMD</sequence>
<gene>
    <name evidence="5" type="primary">Polr1c</name>
    <name type="synonym">Rpo1-1</name>
</gene>
<reference key="1">
    <citation type="journal article" date="1994" name="J. Biol. Chem.">
        <title>High conservation of subunit composition of RNA polymerase I(A) between yeast and mouse and the molecular cloning of mouse RNA polymerase I 40-kDa subunit RPA40.</title>
        <authorList>
            <person name="Song C.Z."/>
            <person name="Hanada K."/>
            <person name="Yano K."/>
            <person name="Maeda Y."/>
            <person name="Yamamoto K."/>
            <person name="Muramatsu M."/>
        </authorList>
    </citation>
    <scope>NUCLEOTIDE SEQUENCE [MRNA]</scope>
</reference>
<reference key="2">
    <citation type="journal article" date="2005" name="Science">
        <title>The transcriptional landscape of the mammalian genome.</title>
        <authorList>
            <person name="Carninci P."/>
            <person name="Kasukawa T."/>
            <person name="Katayama S."/>
            <person name="Gough J."/>
            <person name="Frith M.C."/>
            <person name="Maeda N."/>
            <person name="Oyama R."/>
            <person name="Ravasi T."/>
            <person name="Lenhard B."/>
            <person name="Wells C."/>
            <person name="Kodzius R."/>
            <person name="Shimokawa K."/>
            <person name="Bajic V.B."/>
            <person name="Brenner S.E."/>
            <person name="Batalov S."/>
            <person name="Forrest A.R."/>
            <person name="Zavolan M."/>
            <person name="Davis M.J."/>
            <person name="Wilming L.G."/>
            <person name="Aidinis V."/>
            <person name="Allen J.E."/>
            <person name="Ambesi-Impiombato A."/>
            <person name="Apweiler R."/>
            <person name="Aturaliya R.N."/>
            <person name="Bailey T.L."/>
            <person name="Bansal M."/>
            <person name="Baxter L."/>
            <person name="Beisel K.W."/>
            <person name="Bersano T."/>
            <person name="Bono H."/>
            <person name="Chalk A.M."/>
            <person name="Chiu K.P."/>
            <person name="Choudhary V."/>
            <person name="Christoffels A."/>
            <person name="Clutterbuck D.R."/>
            <person name="Crowe M.L."/>
            <person name="Dalla E."/>
            <person name="Dalrymple B.P."/>
            <person name="de Bono B."/>
            <person name="Della Gatta G."/>
            <person name="di Bernardo D."/>
            <person name="Down T."/>
            <person name="Engstrom P."/>
            <person name="Fagiolini M."/>
            <person name="Faulkner G."/>
            <person name="Fletcher C.F."/>
            <person name="Fukushima T."/>
            <person name="Furuno M."/>
            <person name="Futaki S."/>
            <person name="Gariboldi M."/>
            <person name="Georgii-Hemming P."/>
            <person name="Gingeras T.R."/>
            <person name="Gojobori T."/>
            <person name="Green R.E."/>
            <person name="Gustincich S."/>
            <person name="Harbers M."/>
            <person name="Hayashi Y."/>
            <person name="Hensch T.K."/>
            <person name="Hirokawa N."/>
            <person name="Hill D."/>
            <person name="Huminiecki L."/>
            <person name="Iacono M."/>
            <person name="Ikeo K."/>
            <person name="Iwama A."/>
            <person name="Ishikawa T."/>
            <person name="Jakt M."/>
            <person name="Kanapin A."/>
            <person name="Katoh M."/>
            <person name="Kawasawa Y."/>
            <person name="Kelso J."/>
            <person name="Kitamura H."/>
            <person name="Kitano H."/>
            <person name="Kollias G."/>
            <person name="Krishnan S.P."/>
            <person name="Kruger A."/>
            <person name="Kummerfeld S.K."/>
            <person name="Kurochkin I.V."/>
            <person name="Lareau L.F."/>
            <person name="Lazarevic D."/>
            <person name="Lipovich L."/>
            <person name="Liu J."/>
            <person name="Liuni S."/>
            <person name="McWilliam S."/>
            <person name="Madan Babu M."/>
            <person name="Madera M."/>
            <person name="Marchionni L."/>
            <person name="Matsuda H."/>
            <person name="Matsuzawa S."/>
            <person name="Miki H."/>
            <person name="Mignone F."/>
            <person name="Miyake S."/>
            <person name="Morris K."/>
            <person name="Mottagui-Tabar S."/>
            <person name="Mulder N."/>
            <person name="Nakano N."/>
            <person name="Nakauchi H."/>
            <person name="Ng P."/>
            <person name="Nilsson R."/>
            <person name="Nishiguchi S."/>
            <person name="Nishikawa S."/>
            <person name="Nori F."/>
            <person name="Ohara O."/>
            <person name="Okazaki Y."/>
            <person name="Orlando V."/>
            <person name="Pang K.C."/>
            <person name="Pavan W.J."/>
            <person name="Pavesi G."/>
            <person name="Pesole G."/>
            <person name="Petrovsky N."/>
            <person name="Piazza S."/>
            <person name="Reed J."/>
            <person name="Reid J.F."/>
            <person name="Ring B.Z."/>
            <person name="Ringwald M."/>
            <person name="Rost B."/>
            <person name="Ruan Y."/>
            <person name="Salzberg S.L."/>
            <person name="Sandelin A."/>
            <person name="Schneider C."/>
            <person name="Schoenbach C."/>
            <person name="Sekiguchi K."/>
            <person name="Semple C.A."/>
            <person name="Seno S."/>
            <person name="Sessa L."/>
            <person name="Sheng Y."/>
            <person name="Shibata Y."/>
            <person name="Shimada H."/>
            <person name="Shimada K."/>
            <person name="Silva D."/>
            <person name="Sinclair B."/>
            <person name="Sperling S."/>
            <person name="Stupka E."/>
            <person name="Sugiura K."/>
            <person name="Sultana R."/>
            <person name="Takenaka Y."/>
            <person name="Taki K."/>
            <person name="Tammoja K."/>
            <person name="Tan S.L."/>
            <person name="Tang S."/>
            <person name="Taylor M.S."/>
            <person name="Tegner J."/>
            <person name="Teichmann S.A."/>
            <person name="Ueda H.R."/>
            <person name="van Nimwegen E."/>
            <person name="Verardo R."/>
            <person name="Wei C.L."/>
            <person name="Yagi K."/>
            <person name="Yamanishi H."/>
            <person name="Zabarovsky E."/>
            <person name="Zhu S."/>
            <person name="Zimmer A."/>
            <person name="Hide W."/>
            <person name="Bult C."/>
            <person name="Grimmond S.M."/>
            <person name="Teasdale R.D."/>
            <person name="Liu E.T."/>
            <person name="Brusic V."/>
            <person name="Quackenbush J."/>
            <person name="Wahlestedt C."/>
            <person name="Mattick J.S."/>
            <person name="Hume D.A."/>
            <person name="Kai C."/>
            <person name="Sasaki D."/>
            <person name="Tomaru Y."/>
            <person name="Fukuda S."/>
            <person name="Kanamori-Katayama M."/>
            <person name="Suzuki M."/>
            <person name="Aoki J."/>
            <person name="Arakawa T."/>
            <person name="Iida J."/>
            <person name="Imamura K."/>
            <person name="Itoh M."/>
            <person name="Kato T."/>
            <person name="Kawaji H."/>
            <person name="Kawagashira N."/>
            <person name="Kawashima T."/>
            <person name="Kojima M."/>
            <person name="Kondo S."/>
            <person name="Konno H."/>
            <person name="Nakano K."/>
            <person name="Ninomiya N."/>
            <person name="Nishio T."/>
            <person name="Okada M."/>
            <person name="Plessy C."/>
            <person name="Shibata K."/>
            <person name="Shiraki T."/>
            <person name="Suzuki S."/>
            <person name="Tagami M."/>
            <person name="Waki K."/>
            <person name="Watahiki A."/>
            <person name="Okamura-Oho Y."/>
            <person name="Suzuki H."/>
            <person name="Kawai J."/>
            <person name="Hayashizaki Y."/>
        </authorList>
    </citation>
    <scope>NUCLEOTIDE SEQUENCE [LARGE SCALE MRNA]</scope>
    <source>
        <strain>C57BL/6J</strain>
        <strain>DBA/2J</strain>
        <tissue>Head</tissue>
    </source>
</reference>
<reference key="3">
    <citation type="submission" date="2005-07" db="EMBL/GenBank/DDBJ databases">
        <authorList>
            <person name="Mural R.J."/>
            <person name="Adams M.D."/>
            <person name="Myers E.W."/>
            <person name="Smith H.O."/>
            <person name="Venter J.C."/>
        </authorList>
    </citation>
    <scope>NUCLEOTIDE SEQUENCE [LARGE SCALE GENOMIC DNA]</scope>
</reference>
<reference key="4">
    <citation type="journal article" date="1997" name="Gene">
        <title>Isolation and characterization of cDNA encoding mouse RNA polymerase II subunit RPB14.</title>
        <authorList>
            <person name="Nishi Y."/>
            <person name="Yamamoto K."/>
            <person name="Yao Y."/>
            <person name="Yamamoto M."/>
            <person name="Nogi Y."/>
            <person name="Matsuo H."/>
            <person name="Muramatsu M."/>
        </authorList>
    </citation>
    <scope>MUTAGENESIS OF ALA-73</scope>
</reference>
<reference key="5">
    <citation type="journal article" date="2010" name="Cell">
        <title>A tissue-specific atlas of mouse protein phosphorylation and expression.</title>
        <authorList>
            <person name="Huttlin E.L."/>
            <person name="Jedrychowski M.P."/>
            <person name="Elias J.E."/>
            <person name="Goswami T."/>
            <person name="Rad R."/>
            <person name="Beausoleil S.A."/>
            <person name="Villen J."/>
            <person name="Haas W."/>
            <person name="Sowa M.E."/>
            <person name="Gygi S.P."/>
        </authorList>
    </citation>
    <scope>IDENTIFICATION BY MASS SPECTROMETRY [LARGE SCALE ANALYSIS]</scope>
    <source>
        <tissue>Spleen</tissue>
        <tissue>Testis</tissue>
    </source>
</reference>
<feature type="initiator methionine" description="Removed" evidence="1">
    <location>
        <position position="1"/>
    </location>
</feature>
<feature type="chain" id="PRO_0000132740" description="DNA-directed RNA polymerases I and III subunit RPAC1">
    <location>
        <begin position="2"/>
        <end position="346"/>
    </location>
</feature>
<feature type="modified residue" description="N-acetylalanine" evidence="1">
    <location>
        <position position="2"/>
    </location>
</feature>
<feature type="mutagenesis site" description="Unable to interact with RPB14." evidence="3">
    <original>A</original>
    <variation>D</variation>
    <location>
        <position position="73"/>
    </location>
</feature>
<feature type="mutagenesis site" description="Temperature-sensitive defect in the interaction with RPB14." evidence="3">
    <original>A</original>
    <variation>R</variation>
    <location>
        <position position="73"/>
    </location>
</feature>
<feature type="sequence conflict" description="In Ref. 1; BAA06735." evidence="4" ref="1">
    <original>D</original>
    <variation>G</variation>
    <location>
        <position position="52"/>
    </location>
</feature>
<feature type="sequence conflict" description="In Ref. 1; BAA06735." evidence="4" ref="1">
    <original>E</original>
    <variation>R</variation>
    <location>
        <position position="83"/>
    </location>
</feature>
<evidence type="ECO:0000250" key="1">
    <source>
        <dbReference type="UniProtKB" id="O15160"/>
    </source>
</evidence>
<evidence type="ECO:0000250" key="2">
    <source>
        <dbReference type="UniProtKB" id="P07703"/>
    </source>
</evidence>
<evidence type="ECO:0000269" key="3">
    <source>
    </source>
</evidence>
<evidence type="ECO:0000305" key="4"/>
<evidence type="ECO:0000312" key="5">
    <source>
        <dbReference type="MGI" id="MGI:103288"/>
    </source>
</evidence>
<name>RPAC1_MOUSE</name>
<protein>
    <recommendedName>
        <fullName>DNA-directed RNA polymerases I and III subunit RPAC1</fullName>
        <shortName>DNA-directed RNA polymerase I subunit C</shortName>
        <shortName>RNA polymerases I and III subunit AC1</shortName>
    </recommendedName>
    <alternativeName>
        <fullName>AC40</fullName>
    </alternativeName>
    <alternativeName>
        <fullName>DNA-directed RNA polymerases I and III 40 kDa polypeptide</fullName>
        <shortName>RPA40</shortName>
    </alternativeName>
    <alternativeName>
        <fullName>RPC40</fullName>
    </alternativeName>
</protein>
<comment type="function">
    <text evidence="1 2">DNA-dependent RNA polymerase catalyzes the transcription of DNA into RNA using the four ribonucleoside triphosphates as substrates. Common component of RNA polymerases I and III which synthesize ribosomal RNA precursors and short non-coding RNAs including 5S rRNA, snRNAs, tRNAs and miRNAs, respectively. POLR1C/RPAC1 is part of the polymerase core and may function as a clamp element that moves to open and close the cleft (By similarity).</text>
</comment>
<comment type="subunit">
    <text evidence="1">Component of the RNA polymerase I and RNA polymerase III complexes consisting of at least 13 and 17 subunits, respectively (By similarity). Pol I complex consists of a ten-subunit catalytic core composed of POLR1A/RPA1, POLR1B/RPA2, POLR1C/RPAC1, POLR1D/RPAC2, POLR1H/RPA12, POLR2E/RPABC1, POLR2F/RPABC2, POLR2H/RPABC3, POLR2K/RPABC4 and POLR2L/RPABC5; a mobile stalk subunit POLR1F/RPA43 protruding from the core and additional subunits homologous to general transcription factors POLR1E/RPA49 and POLR1G/RPA34. Part of Pol I pre-initiation complex (PIC), in which Pol I core assembles with RRN3 and promoter-bound UTBF and SL1/TIF-IB complex (By similarity). Pol III complex consists of a ten-subunit catalytic core composed of POLR3A/RPC1, POLR3B/RPC2, POLR1C/RPAC1, POLR1D/RPAC2, POLR3K/RPC10, POLR2E/RPABC1, POLR2F/RPABC2, POLR2H/RPABC3, POLR2K/RPABC4 and POLR2L/RPABC5; a mobile stalk composed of two subunits POLR3H/RPC8 and CRCP/RPC9, protruding from the core and functioning primarily in transcription initiation; and additional subunits homologous to general transcription factors of the RNA polymerase II machinery, POLR3C/RPC3-POLR3F/RPC6-POLR3G/RPC7 heterotrimer required for transcription initiation and POLR3D/RPC4-POLR3E/RPC5 heterodimer involved in both transcription initiation and termination (By similarity).</text>
</comment>
<comment type="subcellular location">
    <subcellularLocation>
        <location evidence="1">Nucleus</location>
    </subcellularLocation>
    <subcellularLocation>
        <location evidence="1">Cytoplasm</location>
        <location evidence="1">Cytosol</location>
    </subcellularLocation>
</comment>
<comment type="similarity">
    <text evidence="4">Belongs to the archaeal Rpo3/eukaryotic RPB3 RNA polymerase subunit family.</text>
</comment>
<comment type="sequence caution" evidence="4">
    <conflict type="erroneous initiation">
        <sequence resource="EMBL-CDS" id="BAA06735"/>
    </conflict>
</comment>
<dbReference type="EMBL" id="D31966">
    <property type="protein sequence ID" value="BAA06735.1"/>
    <property type="status" value="ALT_INIT"/>
    <property type="molecule type" value="mRNA"/>
</dbReference>
<dbReference type="EMBL" id="AK132114">
    <property type="protein sequence ID" value="BAE20986.1"/>
    <property type="molecule type" value="mRNA"/>
</dbReference>
<dbReference type="EMBL" id="AK146240">
    <property type="protein sequence ID" value="BAE27005.1"/>
    <property type="molecule type" value="mRNA"/>
</dbReference>
<dbReference type="EMBL" id="CH466559">
    <property type="protein sequence ID" value="EDL23483.1"/>
    <property type="molecule type" value="Genomic_DNA"/>
</dbReference>
<dbReference type="CCDS" id="CCDS37632.1"/>
<dbReference type="PIR" id="A55082">
    <property type="entry name" value="A55082"/>
</dbReference>
<dbReference type="RefSeq" id="NP_033111.2">
    <property type="nucleotide sequence ID" value="NM_009085.2"/>
</dbReference>
<dbReference type="SMR" id="P52432"/>
<dbReference type="BioGRID" id="202992">
    <property type="interactions" value="14"/>
</dbReference>
<dbReference type="FunCoup" id="P52432">
    <property type="interactions" value="2271"/>
</dbReference>
<dbReference type="STRING" id="10090.ENSMUSP00000084252"/>
<dbReference type="iPTMnet" id="P52432"/>
<dbReference type="PhosphoSitePlus" id="P52432"/>
<dbReference type="PaxDb" id="10090-ENSMUSP00000084252"/>
<dbReference type="PeptideAtlas" id="P52432"/>
<dbReference type="ProteomicsDB" id="260920"/>
<dbReference type="Pumba" id="P52432"/>
<dbReference type="Antibodypedia" id="30448">
    <property type="antibodies" value="293 antibodies from 32 providers"/>
</dbReference>
<dbReference type="DNASU" id="20016"/>
<dbReference type="Ensembl" id="ENSMUST00000087026.13">
    <property type="protein sequence ID" value="ENSMUSP00000084252.7"/>
    <property type="gene ID" value="ENSMUSG00000067148.16"/>
</dbReference>
<dbReference type="GeneID" id="20016"/>
<dbReference type="KEGG" id="mmu:20016"/>
<dbReference type="UCSC" id="uc008csc.1">
    <property type="organism name" value="mouse"/>
</dbReference>
<dbReference type="AGR" id="MGI:103288"/>
<dbReference type="CTD" id="9533"/>
<dbReference type="MGI" id="MGI:103288">
    <property type="gene designation" value="Polr1c"/>
</dbReference>
<dbReference type="VEuPathDB" id="HostDB:ENSMUSG00000067148"/>
<dbReference type="eggNOG" id="KOG1521">
    <property type="taxonomic scope" value="Eukaryota"/>
</dbReference>
<dbReference type="GeneTree" id="ENSGT00950000183100"/>
<dbReference type="HOGENOM" id="CLU_038421_0_1_1"/>
<dbReference type="InParanoid" id="P52432"/>
<dbReference type="OMA" id="KKKCRAF"/>
<dbReference type="OrthoDB" id="270173at2759"/>
<dbReference type="PhylomeDB" id="P52432"/>
<dbReference type="TreeFam" id="TF103034"/>
<dbReference type="Reactome" id="R-MMU-5250924">
    <property type="pathway name" value="B-WICH complex positively regulates rRNA expression"/>
</dbReference>
<dbReference type="Reactome" id="R-MMU-73762">
    <property type="pathway name" value="RNA Polymerase I Transcription Initiation"/>
</dbReference>
<dbReference type="Reactome" id="R-MMU-73772">
    <property type="pathway name" value="RNA Polymerase I Promoter Escape"/>
</dbReference>
<dbReference type="Reactome" id="R-MMU-73863">
    <property type="pathway name" value="RNA Polymerase I Transcription Termination"/>
</dbReference>
<dbReference type="Reactome" id="R-MMU-76061">
    <property type="pathway name" value="RNA Polymerase III Transcription Initiation From Type 1 Promoter"/>
</dbReference>
<dbReference type="Reactome" id="R-MMU-76066">
    <property type="pathway name" value="RNA Polymerase III Transcription Initiation From Type 2 Promoter"/>
</dbReference>
<dbReference type="Reactome" id="R-MMU-76071">
    <property type="pathway name" value="RNA Polymerase III Transcription Initiation From Type 3 Promoter"/>
</dbReference>
<dbReference type="BioGRID-ORCS" id="20016">
    <property type="hits" value="29 hits in 80 CRISPR screens"/>
</dbReference>
<dbReference type="ChiTaRS" id="Polr1c">
    <property type="organism name" value="mouse"/>
</dbReference>
<dbReference type="PRO" id="PR:P52432"/>
<dbReference type="Proteomes" id="UP000000589">
    <property type="component" value="Chromosome 17"/>
</dbReference>
<dbReference type="RNAct" id="P52432">
    <property type="molecule type" value="protein"/>
</dbReference>
<dbReference type="Bgee" id="ENSMUSG00000067148">
    <property type="expression patterns" value="Expressed in metanephric ureteric bud and 260 other cell types or tissues"/>
</dbReference>
<dbReference type="ExpressionAtlas" id="P52432">
    <property type="expression patterns" value="baseline and differential"/>
</dbReference>
<dbReference type="GO" id="GO:0005829">
    <property type="term" value="C:cytosol"/>
    <property type="evidence" value="ECO:0007669"/>
    <property type="project" value="UniProtKB-SubCell"/>
</dbReference>
<dbReference type="GO" id="GO:0001650">
    <property type="term" value="C:fibrillar center"/>
    <property type="evidence" value="ECO:0007669"/>
    <property type="project" value="Ensembl"/>
</dbReference>
<dbReference type="GO" id="GO:0005654">
    <property type="term" value="C:nucleoplasm"/>
    <property type="evidence" value="ECO:0000304"/>
    <property type="project" value="Reactome"/>
</dbReference>
<dbReference type="GO" id="GO:0005736">
    <property type="term" value="C:RNA polymerase I complex"/>
    <property type="evidence" value="ECO:0000314"/>
    <property type="project" value="MGI"/>
</dbReference>
<dbReference type="GO" id="GO:0005666">
    <property type="term" value="C:RNA polymerase III complex"/>
    <property type="evidence" value="ECO:0000266"/>
    <property type="project" value="MGI"/>
</dbReference>
<dbReference type="GO" id="GO:0003677">
    <property type="term" value="F:DNA binding"/>
    <property type="evidence" value="ECO:0007669"/>
    <property type="project" value="InterPro"/>
</dbReference>
<dbReference type="GO" id="GO:0003899">
    <property type="term" value="F:DNA-directed RNA polymerase activity"/>
    <property type="evidence" value="ECO:0007669"/>
    <property type="project" value="InterPro"/>
</dbReference>
<dbReference type="GO" id="GO:0046983">
    <property type="term" value="F:protein dimerization activity"/>
    <property type="evidence" value="ECO:0007669"/>
    <property type="project" value="InterPro"/>
</dbReference>
<dbReference type="GO" id="GO:0006351">
    <property type="term" value="P:DNA-templated transcription"/>
    <property type="evidence" value="ECO:0007669"/>
    <property type="project" value="InterPro"/>
</dbReference>
<dbReference type="CDD" id="cd07032">
    <property type="entry name" value="RNAP_I_II_AC40"/>
    <property type="match status" value="1"/>
</dbReference>
<dbReference type="FunFam" id="2.170.120.12:FF:000003">
    <property type="entry name" value="Dna-directed rna polymerases i and iii subunit"/>
    <property type="match status" value="1"/>
</dbReference>
<dbReference type="FunFam" id="3.30.1360.10:FF:000005">
    <property type="entry name" value="Dna-directed rna polymerases i and iii subunit"/>
    <property type="match status" value="1"/>
</dbReference>
<dbReference type="FunFam" id="3.30.1360.10:FF:000009">
    <property type="entry name" value="RNA polymerase I and III subunit C"/>
    <property type="match status" value="1"/>
</dbReference>
<dbReference type="Gene3D" id="2.170.120.12">
    <property type="entry name" value="DNA-directed RNA polymerase, insert domain"/>
    <property type="match status" value="1"/>
</dbReference>
<dbReference type="Gene3D" id="3.30.1360.10">
    <property type="entry name" value="RNA polymerase, RBP11-like subunit"/>
    <property type="match status" value="1"/>
</dbReference>
<dbReference type="HAMAP" id="MF_00320">
    <property type="entry name" value="RNApol_arch_Rpo3"/>
    <property type="match status" value="1"/>
</dbReference>
<dbReference type="InterPro" id="IPR001514">
    <property type="entry name" value="DNA-dir_RNA_pol_30-40kDasu_CS"/>
</dbReference>
<dbReference type="InterPro" id="IPR011262">
    <property type="entry name" value="DNA-dir_RNA_pol_insert"/>
</dbReference>
<dbReference type="InterPro" id="IPR011263">
    <property type="entry name" value="DNA-dir_RNA_pol_RpoA/D/Rpb3"/>
</dbReference>
<dbReference type="InterPro" id="IPR036603">
    <property type="entry name" value="RBP11-like"/>
</dbReference>
<dbReference type="InterPro" id="IPR022842">
    <property type="entry name" value="RNAP_Rpo3/Rpb3/RPAC1"/>
</dbReference>
<dbReference type="InterPro" id="IPR033901">
    <property type="entry name" value="RNAPI/III_AC40"/>
</dbReference>
<dbReference type="InterPro" id="IPR036643">
    <property type="entry name" value="RNApol_insert_sf"/>
</dbReference>
<dbReference type="InterPro" id="IPR050518">
    <property type="entry name" value="Rpo3/RPB3_RNA_Pol_subunit"/>
</dbReference>
<dbReference type="PANTHER" id="PTHR11800">
    <property type="entry name" value="DNA-DIRECTED RNA POLYMERASE"/>
    <property type="match status" value="1"/>
</dbReference>
<dbReference type="PANTHER" id="PTHR11800:SF13">
    <property type="entry name" value="DNA-DIRECTED RNA POLYMERASES I AND III SUBUNIT RPAC1"/>
    <property type="match status" value="1"/>
</dbReference>
<dbReference type="Pfam" id="PF01000">
    <property type="entry name" value="RNA_pol_A_bac"/>
    <property type="match status" value="1"/>
</dbReference>
<dbReference type="Pfam" id="PF01193">
    <property type="entry name" value="RNA_pol_L"/>
    <property type="match status" value="1"/>
</dbReference>
<dbReference type="SMART" id="SM00662">
    <property type="entry name" value="RPOLD"/>
    <property type="match status" value="1"/>
</dbReference>
<dbReference type="SUPFAM" id="SSF56553">
    <property type="entry name" value="Insert subdomain of RNA polymerase alpha subunit"/>
    <property type="match status" value="1"/>
</dbReference>
<dbReference type="SUPFAM" id="SSF55257">
    <property type="entry name" value="RBP11-like subunits of RNA polymerase"/>
    <property type="match status" value="1"/>
</dbReference>
<dbReference type="PROSITE" id="PS00446">
    <property type="entry name" value="RNA_POL_D_30KD"/>
    <property type="match status" value="1"/>
</dbReference>
<organism>
    <name type="scientific">Mus musculus</name>
    <name type="common">Mouse</name>
    <dbReference type="NCBI Taxonomy" id="10090"/>
    <lineage>
        <taxon>Eukaryota</taxon>
        <taxon>Metazoa</taxon>
        <taxon>Chordata</taxon>
        <taxon>Craniata</taxon>
        <taxon>Vertebrata</taxon>
        <taxon>Euteleostomi</taxon>
        <taxon>Mammalia</taxon>
        <taxon>Eutheria</taxon>
        <taxon>Euarchontoglires</taxon>
        <taxon>Glires</taxon>
        <taxon>Rodentia</taxon>
        <taxon>Myomorpha</taxon>
        <taxon>Muroidea</taxon>
        <taxon>Muridae</taxon>
        <taxon>Murinae</taxon>
        <taxon>Mus</taxon>
        <taxon>Mus</taxon>
    </lineage>
</organism>
<proteinExistence type="evidence at protein level"/>